<proteinExistence type="inferred from homology"/>
<gene>
    <name evidence="1" type="primary">rplQ</name>
    <name type="ordered locus">BWG_2985</name>
</gene>
<sequence length="127" mass="14365">MRHRKSGRQLNRNSSHRQAMFRNMAGSLVRHEIIKTTLPKAKELRRVVEPLITLAKTDSVANRRLAFARTRDNEIVAKLFNELGPRFASRAGGYTRILKCGFRAGDNAPMAYIELVDRSEKAEAAAE</sequence>
<feature type="chain" id="PRO_1000215004" description="Large ribosomal subunit protein bL17">
    <location>
        <begin position="1"/>
        <end position="127"/>
    </location>
</feature>
<reference key="1">
    <citation type="journal article" date="2009" name="J. Bacteriol.">
        <title>Genomic sequencing reveals regulatory mutations and recombinational events in the widely used MC4100 lineage of Escherichia coli K-12.</title>
        <authorList>
            <person name="Ferenci T."/>
            <person name="Zhou Z."/>
            <person name="Betteridge T."/>
            <person name="Ren Y."/>
            <person name="Liu Y."/>
            <person name="Feng L."/>
            <person name="Reeves P.R."/>
            <person name="Wang L."/>
        </authorList>
    </citation>
    <scope>NUCLEOTIDE SEQUENCE [LARGE SCALE GENOMIC DNA]</scope>
    <source>
        <strain>K12 / MC4100 / BW2952</strain>
    </source>
</reference>
<dbReference type="EMBL" id="CP001396">
    <property type="protein sequence ID" value="ACR61853.1"/>
    <property type="molecule type" value="Genomic_DNA"/>
</dbReference>
<dbReference type="RefSeq" id="WP_001216368.1">
    <property type="nucleotide sequence ID" value="NC_012759.1"/>
</dbReference>
<dbReference type="SMR" id="C4ZUE9"/>
<dbReference type="GeneID" id="97442834"/>
<dbReference type="KEGG" id="ebw:BWG_2985"/>
<dbReference type="HOGENOM" id="CLU_074407_2_0_6"/>
<dbReference type="GO" id="GO:0022625">
    <property type="term" value="C:cytosolic large ribosomal subunit"/>
    <property type="evidence" value="ECO:0007669"/>
    <property type="project" value="TreeGrafter"/>
</dbReference>
<dbReference type="GO" id="GO:0003735">
    <property type="term" value="F:structural constituent of ribosome"/>
    <property type="evidence" value="ECO:0007669"/>
    <property type="project" value="InterPro"/>
</dbReference>
<dbReference type="GO" id="GO:0006412">
    <property type="term" value="P:translation"/>
    <property type="evidence" value="ECO:0007669"/>
    <property type="project" value="UniProtKB-UniRule"/>
</dbReference>
<dbReference type="FunFam" id="3.90.1030.10:FF:000001">
    <property type="entry name" value="50S ribosomal protein L17"/>
    <property type="match status" value="1"/>
</dbReference>
<dbReference type="Gene3D" id="3.90.1030.10">
    <property type="entry name" value="Ribosomal protein L17"/>
    <property type="match status" value="1"/>
</dbReference>
<dbReference type="HAMAP" id="MF_01368">
    <property type="entry name" value="Ribosomal_bL17"/>
    <property type="match status" value="1"/>
</dbReference>
<dbReference type="InterPro" id="IPR000456">
    <property type="entry name" value="Ribosomal_bL17"/>
</dbReference>
<dbReference type="InterPro" id="IPR047859">
    <property type="entry name" value="Ribosomal_bL17_CS"/>
</dbReference>
<dbReference type="InterPro" id="IPR036373">
    <property type="entry name" value="Ribosomal_bL17_sf"/>
</dbReference>
<dbReference type="NCBIfam" id="TIGR00059">
    <property type="entry name" value="L17"/>
    <property type="match status" value="1"/>
</dbReference>
<dbReference type="PANTHER" id="PTHR14413:SF16">
    <property type="entry name" value="LARGE RIBOSOMAL SUBUNIT PROTEIN BL17M"/>
    <property type="match status" value="1"/>
</dbReference>
<dbReference type="PANTHER" id="PTHR14413">
    <property type="entry name" value="RIBOSOMAL PROTEIN L17"/>
    <property type="match status" value="1"/>
</dbReference>
<dbReference type="Pfam" id="PF01196">
    <property type="entry name" value="Ribosomal_L17"/>
    <property type="match status" value="1"/>
</dbReference>
<dbReference type="SUPFAM" id="SSF64263">
    <property type="entry name" value="Prokaryotic ribosomal protein L17"/>
    <property type="match status" value="1"/>
</dbReference>
<dbReference type="PROSITE" id="PS01167">
    <property type="entry name" value="RIBOSOMAL_L17"/>
    <property type="match status" value="1"/>
</dbReference>
<protein>
    <recommendedName>
        <fullName evidence="1">Large ribosomal subunit protein bL17</fullName>
    </recommendedName>
    <alternativeName>
        <fullName evidence="2">50S ribosomal protein L17</fullName>
    </alternativeName>
</protein>
<evidence type="ECO:0000255" key="1">
    <source>
        <dbReference type="HAMAP-Rule" id="MF_01368"/>
    </source>
</evidence>
<evidence type="ECO:0000305" key="2"/>
<name>RL17_ECOBW</name>
<accession>C4ZUE9</accession>
<keyword id="KW-0687">Ribonucleoprotein</keyword>
<keyword id="KW-0689">Ribosomal protein</keyword>
<comment type="subunit">
    <text evidence="1">Part of the 50S ribosomal subunit. Contacts protein L32.</text>
</comment>
<comment type="similarity">
    <text evidence="1">Belongs to the bacterial ribosomal protein bL17 family.</text>
</comment>
<organism>
    <name type="scientific">Escherichia coli (strain K12 / MC4100 / BW2952)</name>
    <dbReference type="NCBI Taxonomy" id="595496"/>
    <lineage>
        <taxon>Bacteria</taxon>
        <taxon>Pseudomonadati</taxon>
        <taxon>Pseudomonadota</taxon>
        <taxon>Gammaproteobacteria</taxon>
        <taxon>Enterobacterales</taxon>
        <taxon>Enterobacteriaceae</taxon>
        <taxon>Escherichia</taxon>
    </lineage>
</organism>